<comment type="function">
    <text evidence="1">Catalyzes the conversion of oxaloacetate (OAA) to phosphoenolpyruvate (PEP), the rate-limiting step in the metabolic pathway that produces glucose from lactate and other precursors derived from the citric acid cycle.</text>
</comment>
<comment type="catalytic activity">
    <reaction evidence="1">
        <text>oxaloacetate + GTP = phosphoenolpyruvate + GDP + CO2</text>
        <dbReference type="Rhea" id="RHEA:10388"/>
        <dbReference type="ChEBI" id="CHEBI:16452"/>
        <dbReference type="ChEBI" id="CHEBI:16526"/>
        <dbReference type="ChEBI" id="CHEBI:37565"/>
        <dbReference type="ChEBI" id="CHEBI:58189"/>
        <dbReference type="ChEBI" id="CHEBI:58702"/>
        <dbReference type="EC" id="4.1.1.32"/>
    </reaction>
</comment>
<comment type="cofactor">
    <cofactor evidence="1">
        <name>Mn(2+)</name>
        <dbReference type="ChEBI" id="CHEBI:29035"/>
    </cofactor>
    <text evidence="1">Binds 1 Mn(2+) ion per subunit.</text>
</comment>
<comment type="pathway">
    <text evidence="1">Carbohydrate biosynthesis; gluconeogenesis.</text>
</comment>
<comment type="subunit">
    <text evidence="1">Monomer.</text>
</comment>
<comment type="subcellular location">
    <subcellularLocation>
        <location evidence="1">Cytoplasm</location>
    </subcellularLocation>
</comment>
<comment type="similarity">
    <text evidence="1">Belongs to the phosphoenolpyruvate carboxykinase [GTP] family.</text>
</comment>
<organism>
    <name type="scientific">Frankia alni (strain DSM 45986 / CECT 9034 / ACN14a)</name>
    <dbReference type="NCBI Taxonomy" id="326424"/>
    <lineage>
        <taxon>Bacteria</taxon>
        <taxon>Bacillati</taxon>
        <taxon>Actinomycetota</taxon>
        <taxon>Actinomycetes</taxon>
        <taxon>Frankiales</taxon>
        <taxon>Frankiaceae</taxon>
        <taxon>Frankia</taxon>
    </lineage>
</organism>
<name>PCKG_FRAAA</name>
<reference key="1">
    <citation type="journal article" date="2007" name="Genome Res.">
        <title>Genome characteristics of facultatively symbiotic Frankia sp. strains reflect host range and host plant biogeography.</title>
        <authorList>
            <person name="Normand P."/>
            <person name="Lapierre P."/>
            <person name="Tisa L.S."/>
            <person name="Gogarten J.P."/>
            <person name="Alloisio N."/>
            <person name="Bagnarol E."/>
            <person name="Bassi C.A."/>
            <person name="Berry A.M."/>
            <person name="Bickhart D.M."/>
            <person name="Choisne N."/>
            <person name="Couloux A."/>
            <person name="Cournoyer B."/>
            <person name="Cruveiller S."/>
            <person name="Daubin V."/>
            <person name="Demange N."/>
            <person name="Francino M.P."/>
            <person name="Goltsman E."/>
            <person name="Huang Y."/>
            <person name="Kopp O.R."/>
            <person name="Labarre L."/>
            <person name="Lapidus A."/>
            <person name="Lavire C."/>
            <person name="Marechal J."/>
            <person name="Martinez M."/>
            <person name="Mastronunzio J.E."/>
            <person name="Mullin B.C."/>
            <person name="Niemann J."/>
            <person name="Pujic P."/>
            <person name="Rawnsley T."/>
            <person name="Rouy Z."/>
            <person name="Schenowitz C."/>
            <person name="Sellstedt A."/>
            <person name="Tavares F."/>
            <person name="Tomkins J.P."/>
            <person name="Vallenet D."/>
            <person name="Valverde C."/>
            <person name="Wall L.G."/>
            <person name="Wang Y."/>
            <person name="Medigue C."/>
            <person name="Benson D.R."/>
        </authorList>
    </citation>
    <scope>NUCLEOTIDE SEQUENCE [LARGE SCALE GENOMIC DNA]</scope>
    <source>
        <strain>DSM 45986 / CECT 9034 / ACN14a</strain>
    </source>
</reference>
<keyword id="KW-0963">Cytoplasm</keyword>
<keyword id="KW-0210">Decarboxylase</keyword>
<keyword id="KW-0312">Gluconeogenesis</keyword>
<keyword id="KW-0342">GTP-binding</keyword>
<keyword id="KW-0456">Lyase</keyword>
<keyword id="KW-0464">Manganese</keyword>
<keyword id="KW-0479">Metal-binding</keyword>
<keyword id="KW-0547">Nucleotide-binding</keyword>
<keyword id="KW-1185">Reference proteome</keyword>
<evidence type="ECO:0000255" key="1">
    <source>
        <dbReference type="HAMAP-Rule" id="MF_00452"/>
    </source>
</evidence>
<accession>Q0RCJ7</accession>
<protein>
    <recommendedName>
        <fullName evidence="1">Phosphoenolpyruvate carboxykinase [GTP]</fullName>
        <shortName evidence="1">PEP carboxykinase</shortName>
        <shortName evidence="1">PEPCK</shortName>
        <ecNumber evidence="1">4.1.1.32</ecNumber>
    </recommendedName>
</protein>
<feature type="chain" id="PRO_1000060289" description="Phosphoenolpyruvate carboxykinase [GTP]">
    <location>
        <begin position="1"/>
        <end position="607"/>
    </location>
</feature>
<feature type="active site" evidence="1">
    <location>
        <position position="274"/>
    </location>
</feature>
<feature type="binding site" evidence="1">
    <location>
        <position position="82"/>
    </location>
    <ligand>
        <name>substrate</name>
    </ligand>
</feature>
<feature type="binding site" evidence="1">
    <location>
        <begin position="221"/>
        <end position="223"/>
    </location>
    <ligand>
        <name>substrate</name>
    </ligand>
</feature>
<feature type="binding site" evidence="1">
    <location>
        <position position="230"/>
    </location>
    <ligand>
        <name>Mn(2+)</name>
        <dbReference type="ChEBI" id="CHEBI:29035"/>
    </ligand>
</feature>
<feature type="binding site" evidence="1">
    <location>
        <position position="250"/>
    </location>
    <ligand>
        <name>Mn(2+)</name>
        <dbReference type="ChEBI" id="CHEBI:29035"/>
    </ligand>
</feature>
<feature type="binding site" evidence="1">
    <location>
        <position position="272"/>
    </location>
    <ligand>
        <name>substrate</name>
    </ligand>
</feature>
<feature type="binding site" evidence="1">
    <location>
        <begin position="273"/>
        <end position="278"/>
    </location>
    <ligand>
        <name>GTP</name>
        <dbReference type="ChEBI" id="CHEBI:37565"/>
    </ligand>
</feature>
<feature type="binding site" evidence="1">
    <location>
        <position position="297"/>
    </location>
    <ligand>
        <name>Mn(2+)</name>
        <dbReference type="ChEBI" id="CHEBI:29035"/>
    </ligand>
</feature>
<feature type="binding site" evidence="1">
    <location>
        <begin position="387"/>
        <end position="389"/>
    </location>
    <ligand>
        <name>substrate</name>
    </ligand>
</feature>
<feature type="binding site" evidence="1">
    <location>
        <position position="389"/>
    </location>
    <ligand>
        <name>GTP</name>
        <dbReference type="ChEBI" id="CHEBI:37565"/>
    </ligand>
</feature>
<feature type="binding site" evidence="1">
    <location>
        <position position="420"/>
    </location>
    <ligand>
        <name>GTP</name>
        <dbReference type="ChEBI" id="CHEBI:37565"/>
    </ligand>
</feature>
<feature type="binding site" evidence="1">
    <location>
        <begin position="515"/>
        <end position="518"/>
    </location>
    <ligand>
        <name>GTP</name>
        <dbReference type="ChEBI" id="CHEBI:37565"/>
    </ligand>
</feature>
<dbReference type="EC" id="4.1.1.32" evidence="1"/>
<dbReference type="EMBL" id="CT573213">
    <property type="protein sequence ID" value="CAJ64827.1"/>
    <property type="molecule type" value="Genomic_DNA"/>
</dbReference>
<dbReference type="RefSeq" id="WP_011607254.1">
    <property type="nucleotide sequence ID" value="NC_008278.1"/>
</dbReference>
<dbReference type="SMR" id="Q0RCJ7"/>
<dbReference type="STRING" id="326424.FRAAL6204"/>
<dbReference type="KEGG" id="fal:FRAAL6204"/>
<dbReference type="eggNOG" id="COG1274">
    <property type="taxonomic scope" value="Bacteria"/>
</dbReference>
<dbReference type="HOGENOM" id="CLU_028872_1_1_11"/>
<dbReference type="OrthoDB" id="9758871at2"/>
<dbReference type="UniPathway" id="UPA00138"/>
<dbReference type="Proteomes" id="UP000000657">
    <property type="component" value="Chromosome"/>
</dbReference>
<dbReference type="GO" id="GO:0005829">
    <property type="term" value="C:cytosol"/>
    <property type="evidence" value="ECO:0007669"/>
    <property type="project" value="TreeGrafter"/>
</dbReference>
<dbReference type="GO" id="GO:0005525">
    <property type="term" value="F:GTP binding"/>
    <property type="evidence" value="ECO:0007669"/>
    <property type="project" value="UniProtKB-UniRule"/>
</dbReference>
<dbReference type="GO" id="GO:0030145">
    <property type="term" value="F:manganese ion binding"/>
    <property type="evidence" value="ECO:0007669"/>
    <property type="project" value="UniProtKB-UniRule"/>
</dbReference>
<dbReference type="GO" id="GO:0004613">
    <property type="term" value="F:phosphoenolpyruvate carboxykinase (GTP) activity"/>
    <property type="evidence" value="ECO:0007669"/>
    <property type="project" value="UniProtKB-UniRule"/>
</dbReference>
<dbReference type="GO" id="GO:0071333">
    <property type="term" value="P:cellular response to glucose stimulus"/>
    <property type="evidence" value="ECO:0007669"/>
    <property type="project" value="TreeGrafter"/>
</dbReference>
<dbReference type="GO" id="GO:0006094">
    <property type="term" value="P:gluconeogenesis"/>
    <property type="evidence" value="ECO:0007669"/>
    <property type="project" value="UniProtKB-UniRule"/>
</dbReference>
<dbReference type="GO" id="GO:0046327">
    <property type="term" value="P:glycerol biosynthetic process from pyruvate"/>
    <property type="evidence" value="ECO:0007669"/>
    <property type="project" value="TreeGrafter"/>
</dbReference>
<dbReference type="GO" id="GO:0006107">
    <property type="term" value="P:oxaloacetate metabolic process"/>
    <property type="evidence" value="ECO:0007669"/>
    <property type="project" value="TreeGrafter"/>
</dbReference>
<dbReference type="GO" id="GO:0019543">
    <property type="term" value="P:propionate catabolic process"/>
    <property type="evidence" value="ECO:0007669"/>
    <property type="project" value="TreeGrafter"/>
</dbReference>
<dbReference type="GO" id="GO:0033993">
    <property type="term" value="P:response to lipid"/>
    <property type="evidence" value="ECO:0007669"/>
    <property type="project" value="TreeGrafter"/>
</dbReference>
<dbReference type="GO" id="GO:0042594">
    <property type="term" value="P:response to starvation"/>
    <property type="evidence" value="ECO:0007669"/>
    <property type="project" value="TreeGrafter"/>
</dbReference>
<dbReference type="CDD" id="cd00819">
    <property type="entry name" value="PEPCK_GTP"/>
    <property type="match status" value="1"/>
</dbReference>
<dbReference type="FunFam" id="3.40.449.10:FF:000005">
    <property type="entry name" value="Phosphoenolpyruvate carboxykinase [GTP]"/>
    <property type="match status" value="1"/>
</dbReference>
<dbReference type="Gene3D" id="3.90.228.20">
    <property type="match status" value="1"/>
</dbReference>
<dbReference type="Gene3D" id="3.40.449.10">
    <property type="entry name" value="Phosphoenolpyruvate Carboxykinase, domain 1"/>
    <property type="match status" value="1"/>
</dbReference>
<dbReference type="Gene3D" id="2.170.8.10">
    <property type="entry name" value="Phosphoenolpyruvate Carboxykinase, domain 2"/>
    <property type="match status" value="1"/>
</dbReference>
<dbReference type="HAMAP" id="MF_00452">
    <property type="entry name" value="PEPCK_GTP"/>
    <property type="match status" value="1"/>
</dbReference>
<dbReference type="InterPro" id="IPR018091">
    <property type="entry name" value="PEP_carboxykin_GTP_CS"/>
</dbReference>
<dbReference type="InterPro" id="IPR013035">
    <property type="entry name" value="PEP_carboxykinase_C"/>
</dbReference>
<dbReference type="InterPro" id="IPR008209">
    <property type="entry name" value="PEP_carboxykinase_GTP"/>
</dbReference>
<dbReference type="InterPro" id="IPR035077">
    <property type="entry name" value="PEP_carboxykinase_GTP_C"/>
</dbReference>
<dbReference type="InterPro" id="IPR035078">
    <property type="entry name" value="PEP_carboxykinase_GTP_N"/>
</dbReference>
<dbReference type="InterPro" id="IPR008210">
    <property type="entry name" value="PEP_carboxykinase_N"/>
</dbReference>
<dbReference type="NCBIfam" id="NF003253">
    <property type="entry name" value="PRK04210.1"/>
    <property type="match status" value="1"/>
</dbReference>
<dbReference type="PANTHER" id="PTHR11561">
    <property type="entry name" value="PHOSPHOENOLPYRUVATE CARBOXYKINASE"/>
    <property type="match status" value="1"/>
</dbReference>
<dbReference type="PANTHER" id="PTHR11561:SF0">
    <property type="entry name" value="PHOSPHOENOLPYRUVATE CARBOXYKINASE [GTP]-RELATED"/>
    <property type="match status" value="1"/>
</dbReference>
<dbReference type="Pfam" id="PF00821">
    <property type="entry name" value="PEPCK_GTP"/>
    <property type="match status" value="1"/>
</dbReference>
<dbReference type="Pfam" id="PF17297">
    <property type="entry name" value="PEPCK_N"/>
    <property type="match status" value="1"/>
</dbReference>
<dbReference type="PIRSF" id="PIRSF001348">
    <property type="entry name" value="PEP_carboxykinase_GTP"/>
    <property type="match status" value="1"/>
</dbReference>
<dbReference type="SUPFAM" id="SSF68923">
    <property type="entry name" value="PEP carboxykinase N-terminal domain"/>
    <property type="match status" value="1"/>
</dbReference>
<dbReference type="SUPFAM" id="SSF53795">
    <property type="entry name" value="PEP carboxykinase-like"/>
    <property type="match status" value="1"/>
</dbReference>
<dbReference type="PROSITE" id="PS00505">
    <property type="entry name" value="PEPCK_GTP"/>
    <property type="match status" value="1"/>
</dbReference>
<gene>
    <name evidence="1" type="primary">pckG</name>
    <name type="ordered locus">FRAAL6204</name>
</gene>
<sequence length="607" mass="66582">MTTAAQIPGLEAAPTKHARLVAWVREIAELTQPERVEWCDGSEAEFDRLTSLLIEKGTLVRLNDEKRPNSFYAASDPSDVARVEDRTYICSEKAEDAGPTNNWMDPAEMRVKLQGLFEGSMRGRTMYVVPFCMGPLGSHISALGVEITDSPYVVISMRTMTRMGAPALEQLGEDGFFVPAVHSLGAPLESGAADVPWPCNTTKYITHFPETREIWSYGSGYGGNALLGKKCYALRIASVMARDEGWLAEHMLILKLTSPAGKVHYIAAAFPSACGKTNLAMLIPTLPGWKAETVGDDIAWMRFGEDGRLYAVNPEAGFFGVAPGTGEQTNPNAIKTLWGNTVFTNVARTDDGDVWWEGLTKQAPGHLTDWKGRDWTPESTEPAAHPNARFTVPAGQCPTIASEWQDPKGVPISAILFGGRRATAVPLVTEAPDWRRGVFFGSIVASETTAAQAGAIGKLRRDPFAMLPFCGYNMADYFAHWLEVGQKADQAKLPRIYYVNWFRKSPEGKFLWPGFGENSRVLAWIVGRLEGHADGVETPLGVLPTRDALPTDGLQIDEADLDALLTVDIDVWKQEAELIPEHYQTFGDRLPAALWAEHEALVSRLDG</sequence>
<proteinExistence type="inferred from homology"/>